<accession>B9KEB1</accession>
<organism>
    <name type="scientific">Campylobacter lari (strain RM2100 / D67 / ATCC BAA-1060)</name>
    <dbReference type="NCBI Taxonomy" id="306263"/>
    <lineage>
        <taxon>Bacteria</taxon>
        <taxon>Pseudomonadati</taxon>
        <taxon>Campylobacterota</taxon>
        <taxon>Epsilonproteobacteria</taxon>
        <taxon>Campylobacterales</taxon>
        <taxon>Campylobacteraceae</taxon>
        <taxon>Campylobacter</taxon>
    </lineage>
</organism>
<sequence>MTKDIIAYANNETLVDTQSFNNDTNLTPIYFDNSKESLEVIRHSCAHLMAQAIKSLYPEAKFFVGPVIEDGFYYDFRVDSKISEEDLSKIEKKMKELAEAKLDITKYELSKAEVKEKFANDDLKQEVLLRIPDGKVSIYKQGEFEDLCRGPHVPNTKYLRFFKLTRVAGAYLGGDEKREMLTRIYGTAFADKESLNEYLKIIEEAKKRDHRKLGNEMKLFAFDDEIGGGLPIWLSNGAKLRSKLEHLLYKAHRLRGYEPVRGPELLKADAWKISGHYANYKENMYFTQIDEQEYGIKPMNCVGHIKIYQSDVRSYRDLPLKFFEYGVVHRHEKSGVLHGLFRVREFTQDDAHIFCMPSQIKEQVLEILSFVDTLMKAFGFDYEMEISTRPAKAIGDDEIWDIATNALKQALDEQGLKYGIDEGGGAFYGPKIDIKITDALKRKWQCGTIQVDFNLPSRFKLEYTDADNEKKQPVMLHRAILGSFERFIGILIEHCAGELPFFIAPTQVAIVPISQNHHEYAKEIAKKLLELGIDSEVYSKNESLNKKIRTAEKAHVPMILVLGDEEVANKSVALRDRRAKEQKTLTLDEFITLTKEKLSEVRF</sequence>
<dbReference type="EC" id="6.1.1.3" evidence="1"/>
<dbReference type="EMBL" id="CP000932">
    <property type="protein sequence ID" value="ACM63396.1"/>
    <property type="molecule type" value="Genomic_DNA"/>
</dbReference>
<dbReference type="RefSeq" id="WP_012660782.1">
    <property type="nucleotide sequence ID" value="NC_012039.1"/>
</dbReference>
<dbReference type="SMR" id="B9KEB1"/>
<dbReference type="STRING" id="306263.Cla_0028"/>
<dbReference type="KEGG" id="cla:CLA_0028"/>
<dbReference type="PATRIC" id="fig|306263.5.peg.29"/>
<dbReference type="eggNOG" id="COG0441">
    <property type="taxonomic scope" value="Bacteria"/>
</dbReference>
<dbReference type="HOGENOM" id="CLU_008554_0_1_7"/>
<dbReference type="Proteomes" id="UP000007727">
    <property type="component" value="Chromosome"/>
</dbReference>
<dbReference type="GO" id="GO:0005829">
    <property type="term" value="C:cytosol"/>
    <property type="evidence" value="ECO:0007669"/>
    <property type="project" value="TreeGrafter"/>
</dbReference>
<dbReference type="GO" id="GO:0005524">
    <property type="term" value="F:ATP binding"/>
    <property type="evidence" value="ECO:0007669"/>
    <property type="project" value="UniProtKB-UniRule"/>
</dbReference>
<dbReference type="GO" id="GO:0046872">
    <property type="term" value="F:metal ion binding"/>
    <property type="evidence" value="ECO:0007669"/>
    <property type="project" value="UniProtKB-KW"/>
</dbReference>
<dbReference type="GO" id="GO:0004829">
    <property type="term" value="F:threonine-tRNA ligase activity"/>
    <property type="evidence" value="ECO:0007669"/>
    <property type="project" value="UniProtKB-UniRule"/>
</dbReference>
<dbReference type="GO" id="GO:0000049">
    <property type="term" value="F:tRNA binding"/>
    <property type="evidence" value="ECO:0007669"/>
    <property type="project" value="UniProtKB-KW"/>
</dbReference>
<dbReference type="GO" id="GO:0006435">
    <property type="term" value="P:threonyl-tRNA aminoacylation"/>
    <property type="evidence" value="ECO:0007669"/>
    <property type="project" value="UniProtKB-UniRule"/>
</dbReference>
<dbReference type="CDD" id="cd00860">
    <property type="entry name" value="ThrRS_anticodon"/>
    <property type="match status" value="1"/>
</dbReference>
<dbReference type="CDD" id="cd00771">
    <property type="entry name" value="ThrRS_core"/>
    <property type="match status" value="1"/>
</dbReference>
<dbReference type="FunFam" id="3.30.930.10:FF:000019">
    <property type="entry name" value="Threonine--tRNA ligase"/>
    <property type="match status" value="1"/>
</dbReference>
<dbReference type="FunFam" id="3.40.50.800:FF:000001">
    <property type="entry name" value="Threonine--tRNA ligase"/>
    <property type="match status" value="1"/>
</dbReference>
<dbReference type="FunFam" id="3.30.980.10:FF:000005">
    <property type="entry name" value="Threonyl-tRNA synthetase, mitochondrial"/>
    <property type="match status" value="1"/>
</dbReference>
<dbReference type="Gene3D" id="3.30.54.20">
    <property type="match status" value="1"/>
</dbReference>
<dbReference type="Gene3D" id="3.40.50.800">
    <property type="entry name" value="Anticodon-binding domain"/>
    <property type="match status" value="1"/>
</dbReference>
<dbReference type="Gene3D" id="3.30.930.10">
    <property type="entry name" value="Bira Bifunctional Protein, Domain 2"/>
    <property type="match status" value="1"/>
</dbReference>
<dbReference type="Gene3D" id="3.30.980.10">
    <property type="entry name" value="Threonyl-trna Synthetase, Chain A, domain 2"/>
    <property type="match status" value="1"/>
</dbReference>
<dbReference type="HAMAP" id="MF_00184">
    <property type="entry name" value="Thr_tRNA_synth"/>
    <property type="match status" value="1"/>
</dbReference>
<dbReference type="InterPro" id="IPR002314">
    <property type="entry name" value="aa-tRNA-synt_IIb"/>
</dbReference>
<dbReference type="InterPro" id="IPR006195">
    <property type="entry name" value="aa-tRNA-synth_II"/>
</dbReference>
<dbReference type="InterPro" id="IPR045864">
    <property type="entry name" value="aa-tRNA-synth_II/BPL/LPL"/>
</dbReference>
<dbReference type="InterPro" id="IPR004154">
    <property type="entry name" value="Anticodon-bd"/>
</dbReference>
<dbReference type="InterPro" id="IPR036621">
    <property type="entry name" value="Anticodon-bd_dom_sf"/>
</dbReference>
<dbReference type="InterPro" id="IPR002320">
    <property type="entry name" value="Thr-tRNA-ligase_IIa"/>
</dbReference>
<dbReference type="InterPro" id="IPR018163">
    <property type="entry name" value="Thr/Ala-tRNA-synth_IIc_edit"/>
</dbReference>
<dbReference type="InterPro" id="IPR047246">
    <property type="entry name" value="ThrRS_anticodon"/>
</dbReference>
<dbReference type="InterPro" id="IPR033728">
    <property type="entry name" value="ThrRS_core"/>
</dbReference>
<dbReference type="InterPro" id="IPR012947">
    <property type="entry name" value="tRNA_SAD"/>
</dbReference>
<dbReference type="NCBIfam" id="TIGR00418">
    <property type="entry name" value="thrS"/>
    <property type="match status" value="1"/>
</dbReference>
<dbReference type="PANTHER" id="PTHR11451:SF44">
    <property type="entry name" value="THREONINE--TRNA LIGASE, CHLOROPLASTIC_MITOCHONDRIAL 2"/>
    <property type="match status" value="1"/>
</dbReference>
<dbReference type="PANTHER" id="PTHR11451">
    <property type="entry name" value="THREONINE-TRNA LIGASE"/>
    <property type="match status" value="1"/>
</dbReference>
<dbReference type="Pfam" id="PF03129">
    <property type="entry name" value="HGTP_anticodon"/>
    <property type="match status" value="1"/>
</dbReference>
<dbReference type="Pfam" id="PF00587">
    <property type="entry name" value="tRNA-synt_2b"/>
    <property type="match status" value="1"/>
</dbReference>
<dbReference type="Pfam" id="PF07973">
    <property type="entry name" value="tRNA_SAD"/>
    <property type="match status" value="1"/>
</dbReference>
<dbReference type="PRINTS" id="PR01047">
    <property type="entry name" value="TRNASYNTHTHR"/>
</dbReference>
<dbReference type="SMART" id="SM00863">
    <property type="entry name" value="tRNA_SAD"/>
    <property type="match status" value="1"/>
</dbReference>
<dbReference type="SUPFAM" id="SSF52954">
    <property type="entry name" value="Class II aaRS ABD-related"/>
    <property type="match status" value="1"/>
</dbReference>
<dbReference type="SUPFAM" id="SSF55681">
    <property type="entry name" value="Class II aaRS and biotin synthetases"/>
    <property type="match status" value="1"/>
</dbReference>
<dbReference type="SUPFAM" id="SSF55186">
    <property type="entry name" value="ThrRS/AlaRS common domain"/>
    <property type="match status" value="1"/>
</dbReference>
<dbReference type="PROSITE" id="PS50862">
    <property type="entry name" value="AA_TRNA_LIGASE_II"/>
    <property type="match status" value="1"/>
</dbReference>
<name>SYT_CAMLR</name>
<reference key="1">
    <citation type="journal article" date="2008" name="Foodborne Pathog. Dis.">
        <title>The complete genome sequence and analysis of the human pathogen Campylobacter lari.</title>
        <authorList>
            <person name="Miller W.G."/>
            <person name="Wang G."/>
            <person name="Binnewies T.T."/>
            <person name="Parker C.T."/>
        </authorList>
    </citation>
    <scope>NUCLEOTIDE SEQUENCE [LARGE SCALE GENOMIC DNA]</scope>
    <source>
        <strain>RM2100 / D67 / ATCC BAA-1060</strain>
    </source>
</reference>
<feature type="chain" id="PRO_1000199535" description="Threonine--tRNA ligase">
    <location>
        <begin position="1"/>
        <end position="603"/>
    </location>
</feature>
<feature type="region of interest" description="Catalytic" evidence="1">
    <location>
        <begin position="209"/>
        <end position="500"/>
    </location>
</feature>
<feature type="binding site" evidence="1">
    <location>
        <position position="301"/>
    </location>
    <ligand>
        <name>Zn(2+)</name>
        <dbReference type="ChEBI" id="CHEBI:29105"/>
    </ligand>
</feature>
<feature type="binding site" evidence="1">
    <location>
        <position position="352"/>
    </location>
    <ligand>
        <name>Zn(2+)</name>
        <dbReference type="ChEBI" id="CHEBI:29105"/>
    </ligand>
</feature>
<feature type="binding site" evidence="1">
    <location>
        <position position="477"/>
    </location>
    <ligand>
        <name>Zn(2+)</name>
        <dbReference type="ChEBI" id="CHEBI:29105"/>
    </ligand>
</feature>
<keyword id="KW-0030">Aminoacyl-tRNA synthetase</keyword>
<keyword id="KW-0067">ATP-binding</keyword>
<keyword id="KW-0963">Cytoplasm</keyword>
<keyword id="KW-0436">Ligase</keyword>
<keyword id="KW-0479">Metal-binding</keyword>
<keyword id="KW-0547">Nucleotide-binding</keyword>
<keyword id="KW-0648">Protein biosynthesis</keyword>
<keyword id="KW-1185">Reference proteome</keyword>
<keyword id="KW-0694">RNA-binding</keyword>
<keyword id="KW-0820">tRNA-binding</keyword>
<keyword id="KW-0862">Zinc</keyword>
<proteinExistence type="inferred from homology"/>
<comment type="function">
    <text evidence="1">Catalyzes the attachment of threonine to tRNA(Thr) in a two-step reaction: L-threonine is first activated by ATP to form Thr-AMP and then transferred to the acceptor end of tRNA(Thr). Also edits incorrectly charged L-seryl-tRNA(Thr).</text>
</comment>
<comment type="catalytic activity">
    <reaction evidence="1">
        <text>tRNA(Thr) + L-threonine + ATP = L-threonyl-tRNA(Thr) + AMP + diphosphate + H(+)</text>
        <dbReference type="Rhea" id="RHEA:24624"/>
        <dbReference type="Rhea" id="RHEA-COMP:9670"/>
        <dbReference type="Rhea" id="RHEA-COMP:9704"/>
        <dbReference type="ChEBI" id="CHEBI:15378"/>
        <dbReference type="ChEBI" id="CHEBI:30616"/>
        <dbReference type="ChEBI" id="CHEBI:33019"/>
        <dbReference type="ChEBI" id="CHEBI:57926"/>
        <dbReference type="ChEBI" id="CHEBI:78442"/>
        <dbReference type="ChEBI" id="CHEBI:78534"/>
        <dbReference type="ChEBI" id="CHEBI:456215"/>
        <dbReference type="EC" id="6.1.1.3"/>
    </reaction>
</comment>
<comment type="cofactor">
    <cofactor evidence="1">
        <name>Zn(2+)</name>
        <dbReference type="ChEBI" id="CHEBI:29105"/>
    </cofactor>
    <text evidence="1">Binds 1 zinc ion per subunit.</text>
</comment>
<comment type="subunit">
    <text evidence="1">Homodimer.</text>
</comment>
<comment type="subcellular location">
    <subcellularLocation>
        <location evidence="1">Cytoplasm</location>
    </subcellularLocation>
</comment>
<comment type="similarity">
    <text evidence="1">Belongs to the class-II aminoacyl-tRNA synthetase family.</text>
</comment>
<gene>
    <name evidence="1" type="primary">thrS</name>
    <name type="ordered locus">Cla_0028</name>
</gene>
<evidence type="ECO:0000255" key="1">
    <source>
        <dbReference type="HAMAP-Rule" id="MF_00184"/>
    </source>
</evidence>
<protein>
    <recommendedName>
        <fullName evidence="1">Threonine--tRNA ligase</fullName>
        <ecNumber evidence="1">6.1.1.3</ecNumber>
    </recommendedName>
    <alternativeName>
        <fullName evidence="1">Threonyl-tRNA synthetase</fullName>
        <shortName evidence="1">ThrRS</shortName>
    </alternativeName>
</protein>